<organism>
    <name type="scientific">Meyerozyma guilliermondii (strain ATCC 6260 / CBS 566 / DSM 6381 / JCM 1539 / NBRC 10279 / NRRL Y-324)</name>
    <name type="common">Yeast</name>
    <name type="synonym">Candida guilliermondii</name>
    <dbReference type="NCBI Taxonomy" id="294746"/>
    <lineage>
        <taxon>Eukaryota</taxon>
        <taxon>Fungi</taxon>
        <taxon>Dikarya</taxon>
        <taxon>Ascomycota</taxon>
        <taxon>Saccharomycotina</taxon>
        <taxon>Pichiomycetes</taxon>
        <taxon>Debaryomycetaceae</taxon>
        <taxon>Meyerozyma</taxon>
    </lineage>
</organism>
<reference key="1">
    <citation type="journal article" date="2009" name="Nature">
        <title>Evolution of pathogenicity and sexual reproduction in eight Candida genomes.</title>
        <authorList>
            <person name="Butler G."/>
            <person name="Rasmussen M.D."/>
            <person name="Lin M.F."/>
            <person name="Santos M.A.S."/>
            <person name="Sakthikumar S."/>
            <person name="Munro C.A."/>
            <person name="Rheinbay E."/>
            <person name="Grabherr M."/>
            <person name="Forche A."/>
            <person name="Reedy J.L."/>
            <person name="Agrafioti I."/>
            <person name="Arnaud M.B."/>
            <person name="Bates S."/>
            <person name="Brown A.J.P."/>
            <person name="Brunke S."/>
            <person name="Costanzo M.C."/>
            <person name="Fitzpatrick D.A."/>
            <person name="de Groot P.W.J."/>
            <person name="Harris D."/>
            <person name="Hoyer L.L."/>
            <person name="Hube B."/>
            <person name="Klis F.M."/>
            <person name="Kodira C."/>
            <person name="Lennard N."/>
            <person name="Logue M.E."/>
            <person name="Martin R."/>
            <person name="Neiman A.M."/>
            <person name="Nikolaou E."/>
            <person name="Quail M.A."/>
            <person name="Quinn J."/>
            <person name="Santos M.C."/>
            <person name="Schmitzberger F.F."/>
            <person name="Sherlock G."/>
            <person name="Shah P."/>
            <person name="Silverstein K.A.T."/>
            <person name="Skrzypek M.S."/>
            <person name="Soll D."/>
            <person name="Staggs R."/>
            <person name="Stansfield I."/>
            <person name="Stumpf M.P.H."/>
            <person name="Sudbery P.E."/>
            <person name="Srikantha T."/>
            <person name="Zeng Q."/>
            <person name="Berman J."/>
            <person name="Berriman M."/>
            <person name="Heitman J."/>
            <person name="Gow N.A.R."/>
            <person name="Lorenz M.C."/>
            <person name="Birren B.W."/>
            <person name="Kellis M."/>
            <person name="Cuomo C.A."/>
        </authorList>
    </citation>
    <scope>NUCLEOTIDE SEQUENCE [LARGE SCALE GENOMIC DNA]</scope>
    <source>
        <strain>ATCC 6260 / CBS 566 / DSM 6381 / JCM 1539 / NBRC 10279 / NRRL Y-324</strain>
    </source>
</reference>
<keyword id="KW-0496">Mitochondrion</keyword>
<keyword id="KW-1185">Reference proteome</keyword>
<keyword id="KW-0809">Transit peptide</keyword>
<evidence type="ECO:0000250" key="1"/>
<evidence type="ECO:0000255" key="2"/>
<evidence type="ECO:0000305" key="3"/>
<comment type="subcellular location">
    <subcellularLocation>
        <location evidence="1">Mitochondrion</location>
    </subcellularLocation>
</comment>
<comment type="similarity">
    <text evidence="3">Belongs to the AIM41 family.</text>
</comment>
<gene>
    <name type="primary">AIM41</name>
    <name type="ORF">PGUG_03854</name>
</gene>
<name>AIM41_PICGU</name>
<protein>
    <recommendedName>
        <fullName>Altered inheritance of mitochondria protein 41, mitochondrial</fullName>
    </recommendedName>
</protein>
<dbReference type="EMBL" id="CH408158">
    <property type="protein sequence ID" value="EDK39756.2"/>
    <property type="molecule type" value="Genomic_DNA"/>
</dbReference>
<dbReference type="RefSeq" id="XP_001484473.1">
    <property type="nucleotide sequence ID" value="XM_001484423.1"/>
</dbReference>
<dbReference type="SMR" id="A5DKQ3"/>
<dbReference type="FunCoup" id="A5DKQ3">
    <property type="interactions" value="110"/>
</dbReference>
<dbReference type="STRING" id="294746.A5DKQ3"/>
<dbReference type="GeneID" id="5126151"/>
<dbReference type="KEGG" id="pgu:PGUG_03854"/>
<dbReference type="VEuPathDB" id="FungiDB:PGUG_03854"/>
<dbReference type="eggNOG" id="ENOG502RZX9">
    <property type="taxonomic scope" value="Eukaryota"/>
</dbReference>
<dbReference type="HOGENOM" id="CLU_123460_0_0_1"/>
<dbReference type="InParanoid" id="A5DKQ3"/>
<dbReference type="OMA" id="CIRTINS"/>
<dbReference type="OrthoDB" id="538640at2759"/>
<dbReference type="Proteomes" id="UP000001997">
    <property type="component" value="Unassembled WGS sequence"/>
</dbReference>
<dbReference type="GO" id="GO:0005739">
    <property type="term" value="C:mitochondrion"/>
    <property type="evidence" value="ECO:0007669"/>
    <property type="project" value="UniProtKB-SubCell"/>
</dbReference>
<dbReference type="GO" id="GO:0016884">
    <property type="term" value="F:carbon-nitrogen ligase activity, with glutamine as amido-N-donor"/>
    <property type="evidence" value="ECO:0007669"/>
    <property type="project" value="InterPro"/>
</dbReference>
<dbReference type="Gene3D" id="1.10.1510.10">
    <property type="entry name" value="Uncharacterised protein YqeY/AIM41 PF09424, N-terminal domain"/>
    <property type="match status" value="1"/>
</dbReference>
<dbReference type="InterPro" id="IPR003789">
    <property type="entry name" value="Asn/Gln_tRNA_amidoTrase-B-like"/>
</dbReference>
<dbReference type="InterPro" id="IPR019004">
    <property type="entry name" value="YqeY/Aim41"/>
</dbReference>
<dbReference type="InterPro" id="IPR042184">
    <property type="entry name" value="YqeY/Aim41_N"/>
</dbReference>
<dbReference type="PANTHER" id="PTHR28055">
    <property type="entry name" value="ALTERED INHERITANCE OF MITOCHONDRIA PROTEIN 41, MITOCHONDRIAL"/>
    <property type="match status" value="1"/>
</dbReference>
<dbReference type="PANTHER" id="PTHR28055:SF1">
    <property type="entry name" value="ALTERED INHERITANCE OF MITOCHONDRIA PROTEIN 41, MITOCHONDRIAL"/>
    <property type="match status" value="1"/>
</dbReference>
<dbReference type="Pfam" id="PF09424">
    <property type="entry name" value="YqeY"/>
    <property type="match status" value="1"/>
</dbReference>
<dbReference type="SUPFAM" id="SSF89095">
    <property type="entry name" value="GatB/YqeY motif"/>
    <property type="match status" value="1"/>
</dbReference>
<sequence>MSPCVNSSVQCATRKSLPNMMIRRFLSSAAYDATLNTLKRDLKTAMMQKKAVEKNTVKSVIAAIKGAEIDGSKQDEFALFKTLSKMHKQRVQSASEYASQNRDDLAQVEQAEAGIIERYLQSLPVASSAQVQDKLRQFCSQVQSQEGEVPMKKVFGMVGEVVGEWNTSMELVRPLVPGVYKEVWGDKKK</sequence>
<proteinExistence type="inferred from homology"/>
<accession>A5DKQ3</accession>
<feature type="transit peptide" description="Mitochondrion" evidence="2">
    <location>
        <begin position="1"/>
        <end position="32"/>
    </location>
</feature>
<feature type="chain" id="PRO_0000399867" description="Altered inheritance of mitochondria protein 41, mitochondrial">
    <location>
        <begin position="33"/>
        <end position="189"/>
    </location>
</feature>